<name>KYNU_XANCP</name>
<sequence length="424" mass="46200">MMTDPLSRSHAAALDAADPLRALRDAFVFPQHGGQDQTYFVGNSLGLQPRQARAMVSEVLDQWGALAVEGHFTGPTQWLTYHQLVRDGLARVVGAQPDEVVAMNTLTVNLHLMMASFYRPSAERAAILIEAGAFPSDRHAVESQLRLHGLDPDTHLIEVEPDAADGTLSMDAIAATIAQHGPRLALVLWPGIQYRTGQAFALGEIARLARAQGAAVGFDLAHAVGNIPLSLHDDGVDFAVWCHYKYLNAGPGAVGGCFVHARHAHSNLPRMAGWWGHEQPTRFRMEPQFVPSPGAEGWQLSNPPVLALAPLRASLELFDQAGMPALRAKSEQLTGHLEQLIHTRVPQVLQIVTPADPAQRGCQLSLRVAGGRTQGRALFEYLQSVGVLGDWREPDVIRIAPVPLYNRFCDLHQLVEHVETWAAA</sequence>
<accession>Q8PAD2</accession>
<reference key="1">
    <citation type="journal article" date="2002" name="Nature">
        <title>Comparison of the genomes of two Xanthomonas pathogens with differing host specificities.</title>
        <authorList>
            <person name="da Silva A.C.R."/>
            <person name="Ferro J.A."/>
            <person name="Reinach F.C."/>
            <person name="Farah C.S."/>
            <person name="Furlan L.R."/>
            <person name="Quaggio R.B."/>
            <person name="Monteiro-Vitorello C.B."/>
            <person name="Van Sluys M.A."/>
            <person name="Almeida N.F. Jr."/>
            <person name="Alves L.M.C."/>
            <person name="do Amaral A.M."/>
            <person name="Bertolini M.C."/>
            <person name="Camargo L.E.A."/>
            <person name="Camarotte G."/>
            <person name="Cannavan F."/>
            <person name="Cardozo J."/>
            <person name="Chambergo F."/>
            <person name="Ciapina L.P."/>
            <person name="Cicarelli R.M.B."/>
            <person name="Coutinho L.L."/>
            <person name="Cursino-Santos J.R."/>
            <person name="El-Dorry H."/>
            <person name="Faria J.B."/>
            <person name="Ferreira A.J.S."/>
            <person name="Ferreira R.C.C."/>
            <person name="Ferro M.I.T."/>
            <person name="Formighieri E.F."/>
            <person name="Franco M.C."/>
            <person name="Greggio C.C."/>
            <person name="Gruber A."/>
            <person name="Katsuyama A.M."/>
            <person name="Kishi L.T."/>
            <person name="Leite R.P."/>
            <person name="Lemos E.G.M."/>
            <person name="Lemos M.V.F."/>
            <person name="Locali E.C."/>
            <person name="Machado M.A."/>
            <person name="Madeira A.M.B.N."/>
            <person name="Martinez-Rossi N.M."/>
            <person name="Martins E.C."/>
            <person name="Meidanis J."/>
            <person name="Menck C.F.M."/>
            <person name="Miyaki C.Y."/>
            <person name="Moon D.H."/>
            <person name="Moreira L.M."/>
            <person name="Novo M.T.M."/>
            <person name="Okura V.K."/>
            <person name="Oliveira M.C."/>
            <person name="Oliveira V.R."/>
            <person name="Pereira H.A."/>
            <person name="Rossi A."/>
            <person name="Sena J.A.D."/>
            <person name="Silva C."/>
            <person name="de Souza R.F."/>
            <person name="Spinola L.A.F."/>
            <person name="Takita M.A."/>
            <person name="Tamura R.E."/>
            <person name="Teixeira E.C."/>
            <person name="Tezza R.I.D."/>
            <person name="Trindade dos Santos M."/>
            <person name="Truffi D."/>
            <person name="Tsai S.M."/>
            <person name="White F.F."/>
            <person name="Setubal J.C."/>
            <person name="Kitajima J.P."/>
        </authorList>
    </citation>
    <scope>NUCLEOTIDE SEQUENCE [LARGE SCALE GENOMIC DNA]</scope>
    <source>
        <strain>ATCC 33913 / DSM 3586 / NCPPB 528 / LMG 568 / P 25</strain>
    </source>
</reference>
<gene>
    <name evidence="1" type="primary">kynU</name>
    <name type="ordered locus">XCC1553</name>
</gene>
<organism>
    <name type="scientific">Xanthomonas campestris pv. campestris (strain ATCC 33913 / DSM 3586 / NCPPB 528 / LMG 568 / P 25)</name>
    <dbReference type="NCBI Taxonomy" id="190485"/>
    <lineage>
        <taxon>Bacteria</taxon>
        <taxon>Pseudomonadati</taxon>
        <taxon>Pseudomonadota</taxon>
        <taxon>Gammaproteobacteria</taxon>
        <taxon>Lysobacterales</taxon>
        <taxon>Lysobacteraceae</taxon>
        <taxon>Xanthomonas</taxon>
    </lineage>
</organism>
<proteinExistence type="inferred from homology"/>
<evidence type="ECO:0000255" key="1">
    <source>
        <dbReference type="HAMAP-Rule" id="MF_01970"/>
    </source>
</evidence>
<protein>
    <recommendedName>
        <fullName evidence="1">Kynureninase</fullName>
        <ecNumber evidence="1">3.7.1.3</ecNumber>
    </recommendedName>
    <alternativeName>
        <fullName evidence="1">L-kynurenine hydrolase</fullName>
    </alternativeName>
</protein>
<dbReference type="EC" id="3.7.1.3" evidence="1"/>
<dbReference type="EMBL" id="AE008922">
    <property type="protein sequence ID" value="AAM40848.1"/>
    <property type="molecule type" value="Genomic_DNA"/>
</dbReference>
<dbReference type="RefSeq" id="NP_636924.2">
    <property type="nucleotide sequence ID" value="NC_003902.1"/>
</dbReference>
<dbReference type="SMR" id="Q8PAD2"/>
<dbReference type="STRING" id="190485.XCC1553"/>
<dbReference type="EnsemblBacteria" id="AAM40848">
    <property type="protein sequence ID" value="AAM40848"/>
    <property type="gene ID" value="XCC1553"/>
</dbReference>
<dbReference type="KEGG" id="xcc:XCC1553"/>
<dbReference type="PATRIC" id="fig|190485.4.peg.1666"/>
<dbReference type="eggNOG" id="COG3844">
    <property type="taxonomic scope" value="Bacteria"/>
</dbReference>
<dbReference type="HOGENOM" id="CLU_003433_4_0_6"/>
<dbReference type="OrthoDB" id="9812626at2"/>
<dbReference type="UniPathway" id="UPA00253">
    <property type="reaction ID" value="UER00329"/>
</dbReference>
<dbReference type="UniPathway" id="UPA00334">
    <property type="reaction ID" value="UER00455"/>
</dbReference>
<dbReference type="Proteomes" id="UP000001010">
    <property type="component" value="Chromosome"/>
</dbReference>
<dbReference type="GO" id="GO:0005737">
    <property type="term" value="C:cytoplasm"/>
    <property type="evidence" value="ECO:0000318"/>
    <property type="project" value="GO_Central"/>
</dbReference>
<dbReference type="GO" id="GO:0030429">
    <property type="term" value="F:kynureninase activity"/>
    <property type="evidence" value="ECO:0000318"/>
    <property type="project" value="GO_Central"/>
</dbReference>
<dbReference type="GO" id="GO:0030170">
    <property type="term" value="F:pyridoxal phosphate binding"/>
    <property type="evidence" value="ECO:0007669"/>
    <property type="project" value="UniProtKB-UniRule"/>
</dbReference>
<dbReference type="GO" id="GO:0043420">
    <property type="term" value="P:anthranilate metabolic process"/>
    <property type="evidence" value="ECO:0000318"/>
    <property type="project" value="GO_Central"/>
</dbReference>
<dbReference type="GO" id="GO:0097053">
    <property type="term" value="P:L-kynurenine catabolic process"/>
    <property type="evidence" value="ECO:0007669"/>
    <property type="project" value="UniProtKB-UniRule"/>
</dbReference>
<dbReference type="GO" id="GO:0019441">
    <property type="term" value="P:L-tryptophan catabolic process to kynurenine"/>
    <property type="evidence" value="ECO:0000318"/>
    <property type="project" value="GO_Central"/>
</dbReference>
<dbReference type="GO" id="GO:0009435">
    <property type="term" value="P:NAD biosynthetic process"/>
    <property type="evidence" value="ECO:0007669"/>
    <property type="project" value="UniProtKB-UniPathway"/>
</dbReference>
<dbReference type="GO" id="GO:0019805">
    <property type="term" value="P:quinolinate biosynthetic process"/>
    <property type="evidence" value="ECO:0007669"/>
    <property type="project" value="UniProtKB-UniRule"/>
</dbReference>
<dbReference type="FunFam" id="3.40.640.10:FF:000031">
    <property type="entry name" value="Kynureninase"/>
    <property type="match status" value="1"/>
</dbReference>
<dbReference type="Gene3D" id="3.90.1150.10">
    <property type="entry name" value="Aspartate Aminotransferase, domain 1"/>
    <property type="match status" value="1"/>
</dbReference>
<dbReference type="Gene3D" id="3.40.640.10">
    <property type="entry name" value="Type I PLP-dependent aspartate aminotransferase-like (Major domain)"/>
    <property type="match status" value="1"/>
</dbReference>
<dbReference type="HAMAP" id="MF_01970">
    <property type="entry name" value="Kynureninase"/>
    <property type="match status" value="1"/>
</dbReference>
<dbReference type="InterPro" id="IPR010111">
    <property type="entry name" value="Kynureninase"/>
</dbReference>
<dbReference type="InterPro" id="IPR015424">
    <property type="entry name" value="PyrdxlP-dep_Trfase"/>
</dbReference>
<dbReference type="InterPro" id="IPR015421">
    <property type="entry name" value="PyrdxlP-dep_Trfase_major"/>
</dbReference>
<dbReference type="InterPro" id="IPR015422">
    <property type="entry name" value="PyrdxlP-dep_Trfase_small"/>
</dbReference>
<dbReference type="NCBIfam" id="TIGR01814">
    <property type="entry name" value="kynureninase"/>
    <property type="match status" value="1"/>
</dbReference>
<dbReference type="PANTHER" id="PTHR14084">
    <property type="entry name" value="KYNURENINASE"/>
    <property type="match status" value="1"/>
</dbReference>
<dbReference type="PANTHER" id="PTHR14084:SF0">
    <property type="entry name" value="KYNURENINASE"/>
    <property type="match status" value="1"/>
</dbReference>
<dbReference type="Pfam" id="PF22580">
    <property type="entry name" value="KYNU_C"/>
    <property type="match status" value="1"/>
</dbReference>
<dbReference type="PIRSF" id="PIRSF038800">
    <property type="entry name" value="KYNU"/>
    <property type="match status" value="1"/>
</dbReference>
<dbReference type="SUPFAM" id="SSF53383">
    <property type="entry name" value="PLP-dependent transferases"/>
    <property type="match status" value="1"/>
</dbReference>
<keyword id="KW-0378">Hydrolase</keyword>
<keyword id="KW-0662">Pyridine nucleotide biosynthesis</keyword>
<keyword id="KW-0663">Pyridoxal phosphate</keyword>
<keyword id="KW-1185">Reference proteome</keyword>
<comment type="function">
    <text evidence="1">Catalyzes the cleavage of L-kynurenine (L-Kyn) and L-3-hydroxykynurenine (L-3OHKyn) into anthranilic acid (AA) and 3-hydroxyanthranilic acid (3-OHAA), respectively.</text>
</comment>
<comment type="catalytic activity">
    <reaction evidence="1">
        <text>L-kynurenine + H2O = anthranilate + L-alanine + H(+)</text>
        <dbReference type="Rhea" id="RHEA:16813"/>
        <dbReference type="ChEBI" id="CHEBI:15377"/>
        <dbReference type="ChEBI" id="CHEBI:15378"/>
        <dbReference type="ChEBI" id="CHEBI:16567"/>
        <dbReference type="ChEBI" id="CHEBI:57959"/>
        <dbReference type="ChEBI" id="CHEBI:57972"/>
        <dbReference type="EC" id="3.7.1.3"/>
    </reaction>
</comment>
<comment type="catalytic activity">
    <reaction evidence="1">
        <text>3-hydroxy-L-kynurenine + H2O = 3-hydroxyanthranilate + L-alanine + H(+)</text>
        <dbReference type="Rhea" id="RHEA:25143"/>
        <dbReference type="ChEBI" id="CHEBI:15377"/>
        <dbReference type="ChEBI" id="CHEBI:15378"/>
        <dbReference type="ChEBI" id="CHEBI:36559"/>
        <dbReference type="ChEBI" id="CHEBI:57972"/>
        <dbReference type="ChEBI" id="CHEBI:58125"/>
        <dbReference type="EC" id="3.7.1.3"/>
    </reaction>
</comment>
<comment type="cofactor">
    <cofactor evidence="1">
        <name>pyridoxal 5'-phosphate</name>
        <dbReference type="ChEBI" id="CHEBI:597326"/>
    </cofactor>
</comment>
<comment type="pathway">
    <text evidence="1">Amino-acid degradation; L-kynurenine degradation; L-alanine and anthranilate from L-kynurenine: step 1/1.</text>
</comment>
<comment type="pathway">
    <text evidence="1">Cofactor biosynthesis; NAD(+) biosynthesis; quinolinate from L-kynurenine: step 2/3.</text>
</comment>
<comment type="subunit">
    <text evidence="1">Homodimer.</text>
</comment>
<comment type="similarity">
    <text evidence="1">Belongs to the kynureninase family.</text>
</comment>
<feature type="chain" id="PRO_0000357018" description="Kynureninase">
    <location>
        <begin position="1"/>
        <end position="424"/>
    </location>
</feature>
<feature type="binding site" evidence="1">
    <location>
        <position position="106"/>
    </location>
    <ligand>
        <name>pyridoxal 5'-phosphate</name>
        <dbReference type="ChEBI" id="CHEBI:597326"/>
    </ligand>
</feature>
<feature type="binding site" evidence="1">
    <location>
        <position position="107"/>
    </location>
    <ligand>
        <name>pyridoxal 5'-phosphate</name>
        <dbReference type="ChEBI" id="CHEBI:597326"/>
    </ligand>
</feature>
<feature type="binding site" evidence="1">
    <location>
        <begin position="134"/>
        <end position="137"/>
    </location>
    <ligand>
        <name>pyridoxal 5'-phosphate</name>
        <dbReference type="ChEBI" id="CHEBI:597326"/>
    </ligand>
</feature>
<feature type="binding site" evidence="1">
    <location>
        <position position="219"/>
    </location>
    <ligand>
        <name>pyridoxal 5'-phosphate</name>
        <dbReference type="ChEBI" id="CHEBI:597326"/>
    </ligand>
</feature>
<feature type="binding site" evidence="1">
    <location>
        <position position="222"/>
    </location>
    <ligand>
        <name>pyridoxal 5'-phosphate</name>
        <dbReference type="ChEBI" id="CHEBI:597326"/>
    </ligand>
</feature>
<feature type="binding site" evidence="1">
    <location>
        <position position="244"/>
    </location>
    <ligand>
        <name>pyridoxal 5'-phosphate</name>
        <dbReference type="ChEBI" id="CHEBI:597326"/>
    </ligand>
</feature>
<feature type="binding site" evidence="1">
    <location>
        <position position="274"/>
    </location>
    <ligand>
        <name>pyridoxal 5'-phosphate</name>
        <dbReference type="ChEBI" id="CHEBI:597326"/>
    </ligand>
</feature>
<feature type="binding site" evidence="1">
    <location>
        <position position="302"/>
    </location>
    <ligand>
        <name>pyridoxal 5'-phosphate</name>
        <dbReference type="ChEBI" id="CHEBI:597326"/>
    </ligand>
</feature>
<feature type="modified residue" description="N6-(pyridoxal phosphate)lysine" evidence="1">
    <location>
        <position position="245"/>
    </location>
</feature>